<evidence type="ECO:0000255" key="1">
    <source>
        <dbReference type="HAMAP-Rule" id="MF_01315"/>
    </source>
</evidence>
<evidence type="ECO:0000256" key="2">
    <source>
        <dbReference type="SAM" id="MobiDB-lite"/>
    </source>
</evidence>
<evidence type="ECO:0000305" key="3"/>
<keyword id="KW-1185">Reference proteome</keyword>
<keyword id="KW-0687">Ribonucleoprotein</keyword>
<keyword id="KW-0689">Ribosomal protein</keyword>
<keyword id="KW-0694">RNA-binding</keyword>
<keyword id="KW-0699">rRNA-binding</keyword>
<keyword id="KW-0820">tRNA-binding</keyword>
<protein>
    <recommendedName>
        <fullName evidence="1">Small ribosomal subunit protein uS13</fullName>
    </recommendedName>
    <alternativeName>
        <fullName evidence="3">30S ribosomal protein S13</fullName>
    </alternativeName>
</protein>
<proteinExistence type="inferred from homology"/>
<gene>
    <name evidence="1" type="primary">rpsM</name>
    <name type="ordered locus">Tbd_0427</name>
</gene>
<organism>
    <name type="scientific">Thiobacillus denitrificans (strain ATCC 25259 / T1)</name>
    <dbReference type="NCBI Taxonomy" id="292415"/>
    <lineage>
        <taxon>Bacteria</taxon>
        <taxon>Pseudomonadati</taxon>
        <taxon>Pseudomonadota</taxon>
        <taxon>Betaproteobacteria</taxon>
        <taxon>Nitrosomonadales</taxon>
        <taxon>Thiobacillaceae</taxon>
        <taxon>Thiobacillus</taxon>
    </lineage>
</organism>
<comment type="function">
    <text evidence="1">Located at the top of the head of the 30S subunit, it contacts several helices of the 16S rRNA. In the 70S ribosome it contacts the 23S rRNA (bridge B1a) and protein L5 of the 50S subunit (bridge B1b), connecting the 2 subunits; these bridges are implicated in subunit movement. Contacts the tRNAs in the A and P-sites.</text>
</comment>
<comment type="subunit">
    <text evidence="1">Part of the 30S ribosomal subunit. Forms a loose heterodimer with protein S19. Forms two bridges to the 50S subunit in the 70S ribosome.</text>
</comment>
<comment type="similarity">
    <text evidence="1">Belongs to the universal ribosomal protein uS13 family.</text>
</comment>
<name>RS13_THIDA</name>
<accession>Q3SLM7</accession>
<sequence>MARIAGVNIPNHQHAVIALTAIYGIGRTTSGKICEAAGIAQTSKIKDLSEAEMERLREGVSKFTVEGDLRREVTMNIKRLMDLGCYRGFRHRKGLPVRGQRTRTNARTRKGPRKAIKK</sequence>
<dbReference type="EMBL" id="CP000116">
    <property type="protein sequence ID" value="AAZ96380.1"/>
    <property type="molecule type" value="Genomic_DNA"/>
</dbReference>
<dbReference type="RefSeq" id="WP_011310939.1">
    <property type="nucleotide sequence ID" value="NC_007404.1"/>
</dbReference>
<dbReference type="SMR" id="Q3SLM7"/>
<dbReference type="STRING" id="292415.Tbd_0427"/>
<dbReference type="KEGG" id="tbd:Tbd_0427"/>
<dbReference type="eggNOG" id="COG0099">
    <property type="taxonomic scope" value="Bacteria"/>
</dbReference>
<dbReference type="HOGENOM" id="CLU_103849_1_2_4"/>
<dbReference type="OrthoDB" id="9803610at2"/>
<dbReference type="Proteomes" id="UP000008291">
    <property type="component" value="Chromosome"/>
</dbReference>
<dbReference type="GO" id="GO:0005829">
    <property type="term" value="C:cytosol"/>
    <property type="evidence" value="ECO:0007669"/>
    <property type="project" value="TreeGrafter"/>
</dbReference>
<dbReference type="GO" id="GO:0015935">
    <property type="term" value="C:small ribosomal subunit"/>
    <property type="evidence" value="ECO:0007669"/>
    <property type="project" value="TreeGrafter"/>
</dbReference>
<dbReference type="GO" id="GO:0019843">
    <property type="term" value="F:rRNA binding"/>
    <property type="evidence" value="ECO:0007669"/>
    <property type="project" value="UniProtKB-UniRule"/>
</dbReference>
<dbReference type="GO" id="GO:0003735">
    <property type="term" value="F:structural constituent of ribosome"/>
    <property type="evidence" value="ECO:0007669"/>
    <property type="project" value="InterPro"/>
</dbReference>
<dbReference type="GO" id="GO:0000049">
    <property type="term" value="F:tRNA binding"/>
    <property type="evidence" value="ECO:0007669"/>
    <property type="project" value="UniProtKB-UniRule"/>
</dbReference>
<dbReference type="GO" id="GO:0006412">
    <property type="term" value="P:translation"/>
    <property type="evidence" value="ECO:0007669"/>
    <property type="project" value="UniProtKB-UniRule"/>
</dbReference>
<dbReference type="FunFam" id="1.10.8.50:FF:000001">
    <property type="entry name" value="30S ribosomal protein S13"/>
    <property type="match status" value="1"/>
</dbReference>
<dbReference type="FunFam" id="4.10.910.10:FF:000001">
    <property type="entry name" value="30S ribosomal protein S13"/>
    <property type="match status" value="1"/>
</dbReference>
<dbReference type="Gene3D" id="1.10.8.50">
    <property type="match status" value="1"/>
</dbReference>
<dbReference type="Gene3D" id="4.10.910.10">
    <property type="entry name" value="30s ribosomal protein s13, domain 2"/>
    <property type="match status" value="1"/>
</dbReference>
<dbReference type="HAMAP" id="MF_01315">
    <property type="entry name" value="Ribosomal_uS13"/>
    <property type="match status" value="1"/>
</dbReference>
<dbReference type="InterPro" id="IPR027437">
    <property type="entry name" value="Rbsml_uS13_C"/>
</dbReference>
<dbReference type="InterPro" id="IPR001892">
    <property type="entry name" value="Ribosomal_uS13"/>
</dbReference>
<dbReference type="InterPro" id="IPR010979">
    <property type="entry name" value="Ribosomal_uS13-like_H2TH"/>
</dbReference>
<dbReference type="InterPro" id="IPR019980">
    <property type="entry name" value="Ribosomal_uS13_bac-type"/>
</dbReference>
<dbReference type="InterPro" id="IPR018269">
    <property type="entry name" value="Ribosomal_uS13_CS"/>
</dbReference>
<dbReference type="NCBIfam" id="TIGR03631">
    <property type="entry name" value="uS13_bact"/>
    <property type="match status" value="1"/>
</dbReference>
<dbReference type="PANTHER" id="PTHR10871">
    <property type="entry name" value="30S RIBOSOMAL PROTEIN S13/40S RIBOSOMAL PROTEIN S18"/>
    <property type="match status" value="1"/>
</dbReference>
<dbReference type="PANTHER" id="PTHR10871:SF1">
    <property type="entry name" value="SMALL RIBOSOMAL SUBUNIT PROTEIN US13M"/>
    <property type="match status" value="1"/>
</dbReference>
<dbReference type="Pfam" id="PF00416">
    <property type="entry name" value="Ribosomal_S13"/>
    <property type="match status" value="1"/>
</dbReference>
<dbReference type="PIRSF" id="PIRSF002134">
    <property type="entry name" value="Ribosomal_S13"/>
    <property type="match status" value="1"/>
</dbReference>
<dbReference type="SUPFAM" id="SSF46946">
    <property type="entry name" value="S13-like H2TH domain"/>
    <property type="match status" value="1"/>
</dbReference>
<dbReference type="PROSITE" id="PS00646">
    <property type="entry name" value="RIBOSOMAL_S13_1"/>
    <property type="match status" value="1"/>
</dbReference>
<dbReference type="PROSITE" id="PS50159">
    <property type="entry name" value="RIBOSOMAL_S13_2"/>
    <property type="match status" value="1"/>
</dbReference>
<feature type="chain" id="PRO_0000230575" description="Small ribosomal subunit protein uS13">
    <location>
        <begin position="1"/>
        <end position="118"/>
    </location>
</feature>
<feature type="region of interest" description="Disordered" evidence="2">
    <location>
        <begin position="94"/>
        <end position="118"/>
    </location>
</feature>
<reference key="1">
    <citation type="journal article" date="2006" name="J. Bacteriol.">
        <title>The genome sequence of the obligately chemolithoautotrophic, facultatively anaerobic bacterium Thiobacillus denitrificans.</title>
        <authorList>
            <person name="Beller H.R."/>
            <person name="Chain P.S."/>
            <person name="Letain T.E."/>
            <person name="Chakicherla A."/>
            <person name="Larimer F.W."/>
            <person name="Richardson P.M."/>
            <person name="Coleman M.A."/>
            <person name="Wood A.P."/>
            <person name="Kelly D.P."/>
        </authorList>
    </citation>
    <scope>NUCLEOTIDE SEQUENCE [LARGE SCALE GENOMIC DNA]</scope>
    <source>
        <strain>ATCC 25259 / T1</strain>
    </source>
</reference>